<accession>B0B9I6</accession>
<sequence length="287" mass="30866">MLLKGAPAADHILATIKENIRACSKAPGLAVVLIGNNPASEIYVNMKIKRATDLGMVSKSYRKPSDATLSDILALIHQLNNDENIHGILVQLPLPKHLDAQAILSTITPDKDVDGLHPVNVGKLLLGETDGFIPCTPAGIVELCKYYEIPLHGKHVVILGRSNIVGKPLAALLMQRHADTNASVTLLHSQSEHLTEITRTADILISAIGVPLFVNKEMIAEKTVIMDVGTSRIPAANPKGYILVGDVDFNNVVPVCRAITPVPGGVGPMTVAMLMRNTWESFLRHTS</sequence>
<proteinExistence type="inferred from homology"/>
<evidence type="ECO:0000255" key="1">
    <source>
        <dbReference type="HAMAP-Rule" id="MF_01576"/>
    </source>
</evidence>
<comment type="function">
    <text evidence="1">Catalyzes the oxidation of 5,10-methylenetetrahydrofolate to 5,10-methenyltetrahydrofolate and then the hydrolysis of 5,10-methenyltetrahydrofolate to 10-formyltetrahydrofolate.</text>
</comment>
<comment type="catalytic activity">
    <reaction evidence="1">
        <text>(6R)-5,10-methylene-5,6,7,8-tetrahydrofolate + NADP(+) = (6R)-5,10-methenyltetrahydrofolate + NADPH</text>
        <dbReference type="Rhea" id="RHEA:22812"/>
        <dbReference type="ChEBI" id="CHEBI:15636"/>
        <dbReference type="ChEBI" id="CHEBI:57455"/>
        <dbReference type="ChEBI" id="CHEBI:57783"/>
        <dbReference type="ChEBI" id="CHEBI:58349"/>
        <dbReference type="EC" id="1.5.1.5"/>
    </reaction>
</comment>
<comment type="catalytic activity">
    <reaction evidence="1">
        <text>(6R)-5,10-methenyltetrahydrofolate + H2O = (6R)-10-formyltetrahydrofolate + H(+)</text>
        <dbReference type="Rhea" id="RHEA:23700"/>
        <dbReference type="ChEBI" id="CHEBI:15377"/>
        <dbReference type="ChEBI" id="CHEBI:15378"/>
        <dbReference type="ChEBI" id="CHEBI:57455"/>
        <dbReference type="ChEBI" id="CHEBI:195366"/>
        <dbReference type="EC" id="3.5.4.9"/>
    </reaction>
</comment>
<comment type="pathway">
    <text evidence="1">One-carbon metabolism; tetrahydrofolate interconversion.</text>
</comment>
<comment type="subunit">
    <text evidence="1">Homodimer.</text>
</comment>
<comment type="similarity">
    <text evidence="1">Belongs to the tetrahydrofolate dehydrogenase/cyclohydrolase family.</text>
</comment>
<keyword id="KW-0028">Amino-acid biosynthesis</keyword>
<keyword id="KW-0368">Histidine biosynthesis</keyword>
<keyword id="KW-0378">Hydrolase</keyword>
<keyword id="KW-0486">Methionine biosynthesis</keyword>
<keyword id="KW-0511">Multifunctional enzyme</keyword>
<keyword id="KW-0521">NADP</keyword>
<keyword id="KW-0554">One-carbon metabolism</keyword>
<keyword id="KW-0560">Oxidoreductase</keyword>
<keyword id="KW-0658">Purine biosynthesis</keyword>
<reference key="1">
    <citation type="journal article" date="2008" name="Genome Res.">
        <title>Chlamydia trachomatis: genome sequence analysis of lymphogranuloma venereum isolates.</title>
        <authorList>
            <person name="Thomson N.R."/>
            <person name="Holden M.T.G."/>
            <person name="Carder C."/>
            <person name="Lennard N."/>
            <person name="Lockey S.J."/>
            <person name="Marsh P."/>
            <person name="Skipp P."/>
            <person name="O'Connor C.D."/>
            <person name="Goodhead I."/>
            <person name="Norbertzcak H."/>
            <person name="Harris B."/>
            <person name="Ormond D."/>
            <person name="Rance R."/>
            <person name="Quail M.A."/>
            <person name="Parkhill J."/>
            <person name="Stephens R.S."/>
            <person name="Clarke I.N."/>
        </authorList>
    </citation>
    <scope>NUCLEOTIDE SEQUENCE [LARGE SCALE GENOMIC DNA]</scope>
    <source>
        <strain>ATCC VR-902B / DSM 19102 / 434/Bu</strain>
    </source>
</reference>
<dbReference type="EC" id="1.5.1.5" evidence="1"/>
<dbReference type="EC" id="3.5.4.9" evidence="1"/>
<dbReference type="EMBL" id="AM884176">
    <property type="protein sequence ID" value="CAP03773.1"/>
    <property type="molecule type" value="Genomic_DNA"/>
</dbReference>
<dbReference type="RefSeq" id="WP_009871427.1">
    <property type="nucleotide sequence ID" value="NC_010287.1"/>
</dbReference>
<dbReference type="RefSeq" id="YP_001654417.1">
    <property type="nucleotide sequence ID" value="NC_010287.1"/>
</dbReference>
<dbReference type="SMR" id="B0B9I6"/>
<dbReference type="KEGG" id="ctb:CTL0334"/>
<dbReference type="PATRIC" id="fig|471472.4.peg.361"/>
<dbReference type="HOGENOM" id="CLU_034045_2_0_0"/>
<dbReference type="UniPathway" id="UPA00193"/>
<dbReference type="Proteomes" id="UP001154402">
    <property type="component" value="Chromosome"/>
</dbReference>
<dbReference type="GO" id="GO:0005829">
    <property type="term" value="C:cytosol"/>
    <property type="evidence" value="ECO:0007669"/>
    <property type="project" value="TreeGrafter"/>
</dbReference>
<dbReference type="GO" id="GO:0004477">
    <property type="term" value="F:methenyltetrahydrofolate cyclohydrolase activity"/>
    <property type="evidence" value="ECO:0007669"/>
    <property type="project" value="UniProtKB-UniRule"/>
</dbReference>
<dbReference type="GO" id="GO:0004488">
    <property type="term" value="F:methylenetetrahydrofolate dehydrogenase (NADP+) activity"/>
    <property type="evidence" value="ECO:0007669"/>
    <property type="project" value="UniProtKB-UniRule"/>
</dbReference>
<dbReference type="GO" id="GO:0000105">
    <property type="term" value="P:L-histidine biosynthetic process"/>
    <property type="evidence" value="ECO:0007669"/>
    <property type="project" value="UniProtKB-KW"/>
</dbReference>
<dbReference type="GO" id="GO:0009086">
    <property type="term" value="P:methionine biosynthetic process"/>
    <property type="evidence" value="ECO:0007669"/>
    <property type="project" value="UniProtKB-KW"/>
</dbReference>
<dbReference type="GO" id="GO:0006164">
    <property type="term" value="P:purine nucleotide biosynthetic process"/>
    <property type="evidence" value="ECO:0007669"/>
    <property type="project" value="UniProtKB-KW"/>
</dbReference>
<dbReference type="GO" id="GO:0035999">
    <property type="term" value="P:tetrahydrofolate interconversion"/>
    <property type="evidence" value="ECO:0007669"/>
    <property type="project" value="UniProtKB-UniRule"/>
</dbReference>
<dbReference type="CDD" id="cd01080">
    <property type="entry name" value="NAD_bind_m-THF_DH_Cyclohyd"/>
    <property type="match status" value="1"/>
</dbReference>
<dbReference type="FunFam" id="3.40.50.720:FF:000094">
    <property type="entry name" value="Bifunctional protein FolD"/>
    <property type="match status" value="1"/>
</dbReference>
<dbReference type="FunFam" id="3.40.50.10860:FF:000005">
    <property type="entry name" value="C-1-tetrahydrofolate synthase, cytoplasmic, putative"/>
    <property type="match status" value="1"/>
</dbReference>
<dbReference type="Gene3D" id="3.40.50.10860">
    <property type="entry name" value="Leucine Dehydrogenase, chain A, domain 1"/>
    <property type="match status" value="1"/>
</dbReference>
<dbReference type="Gene3D" id="3.40.50.720">
    <property type="entry name" value="NAD(P)-binding Rossmann-like Domain"/>
    <property type="match status" value="1"/>
</dbReference>
<dbReference type="HAMAP" id="MF_01576">
    <property type="entry name" value="THF_DHG_CYH"/>
    <property type="match status" value="1"/>
</dbReference>
<dbReference type="InterPro" id="IPR046346">
    <property type="entry name" value="Aminoacid_DH-like_N_sf"/>
</dbReference>
<dbReference type="InterPro" id="IPR036291">
    <property type="entry name" value="NAD(P)-bd_dom_sf"/>
</dbReference>
<dbReference type="InterPro" id="IPR000672">
    <property type="entry name" value="THF_DH/CycHdrlase"/>
</dbReference>
<dbReference type="InterPro" id="IPR020630">
    <property type="entry name" value="THF_DH/CycHdrlase_cat_dom"/>
</dbReference>
<dbReference type="InterPro" id="IPR020867">
    <property type="entry name" value="THF_DH/CycHdrlase_CS"/>
</dbReference>
<dbReference type="InterPro" id="IPR020631">
    <property type="entry name" value="THF_DH/CycHdrlase_NAD-bd_dom"/>
</dbReference>
<dbReference type="NCBIfam" id="NF010778">
    <property type="entry name" value="PRK14181.1"/>
    <property type="match status" value="1"/>
</dbReference>
<dbReference type="PANTHER" id="PTHR48099:SF5">
    <property type="entry name" value="C-1-TETRAHYDROFOLATE SYNTHASE, CYTOPLASMIC"/>
    <property type="match status" value="1"/>
</dbReference>
<dbReference type="PANTHER" id="PTHR48099">
    <property type="entry name" value="C-1-TETRAHYDROFOLATE SYNTHASE, CYTOPLASMIC-RELATED"/>
    <property type="match status" value="1"/>
</dbReference>
<dbReference type="Pfam" id="PF00763">
    <property type="entry name" value="THF_DHG_CYH"/>
    <property type="match status" value="1"/>
</dbReference>
<dbReference type="Pfam" id="PF02882">
    <property type="entry name" value="THF_DHG_CYH_C"/>
    <property type="match status" value="1"/>
</dbReference>
<dbReference type="PRINTS" id="PR00085">
    <property type="entry name" value="THFDHDRGNASE"/>
</dbReference>
<dbReference type="SUPFAM" id="SSF53223">
    <property type="entry name" value="Aminoacid dehydrogenase-like, N-terminal domain"/>
    <property type="match status" value="1"/>
</dbReference>
<dbReference type="SUPFAM" id="SSF51735">
    <property type="entry name" value="NAD(P)-binding Rossmann-fold domains"/>
    <property type="match status" value="1"/>
</dbReference>
<dbReference type="PROSITE" id="PS00766">
    <property type="entry name" value="THF_DHG_CYH_1"/>
    <property type="match status" value="1"/>
</dbReference>
<dbReference type="PROSITE" id="PS00767">
    <property type="entry name" value="THF_DHG_CYH_2"/>
    <property type="match status" value="1"/>
</dbReference>
<gene>
    <name evidence="1" type="primary">folD</name>
    <name type="ordered locus">CTL0334</name>
</gene>
<feature type="chain" id="PRO_1000215589" description="Bifunctional protein FolD">
    <location>
        <begin position="1"/>
        <end position="287"/>
    </location>
</feature>
<feature type="binding site" evidence="1">
    <location>
        <begin position="160"/>
        <end position="162"/>
    </location>
    <ligand>
        <name>NADP(+)</name>
        <dbReference type="ChEBI" id="CHEBI:58349"/>
    </ligand>
</feature>
<feature type="binding site" evidence="1">
    <location>
        <position position="189"/>
    </location>
    <ligand>
        <name>NADP(+)</name>
        <dbReference type="ChEBI" id="CHEBI:58349"/>
    </ligand>
</feature>
<feature type="binding site" evidence="1">
    <location>
        <position position="230"/>
    </location>
    <ligand>
        <name>NADP(+)</name>
        <dbReference type="ChEBI" id="CHEBI:58349"/>
    </ligand>
</feature>
<organism>
    <name type="scientific">Chlamydia trachomatis serovar L2 (strain ATCC VR-902B / DSM 19102 / 434/Bu)</name>
    <dbReference type="NCBI Taxonomy" id="471472"/>
    <lineage>
        <taxon>Bacteria</taxon>
        <taxon>Pseudomonadati</taxon>
        <taxon>Chlamydiota</taxon>
        <taxon>Chlamydiia</taxon>
        <taxon>Chlamydiales</taxon>
        <taxon>Chlamydiaceae</taxon>
        <taxon>Chlamydia/Chlamydophila group</taxon>
        <taxon>Chlamydia</taxon>
    </lineage>
</organism>
<name>FOLD_CHLT2</name>
<protein>
    <recommendedName>
        <fullName evidence="1">Bifunctional protein FolD</fullName>
    </recommendedName>
    <domain>
        <recommendedName>
            <fullName evidence="1">Methylenetetrahydrofolate dehydrogenase</fullName>
            <ecNumber evidence="1">1.5.1.5</ecNumber>
        </recommendedName>
    </domain>
    <domain>
        <recommendedName>
            <fullName evidence="1">Methenyltetrahydrofolate cyclohydrolase</fullName>
            <ecNumber evidence="1">3.5.4.9</ecNumber>
        </recommendedName>
    </domain>
</protein>